<sequence>MSATAKKSAAQLQREEEEARKKLKRLSKQGGVEGRLPMKRLFRQRAHANVLSDHELEYPRSPSEMDWSPYYPDFDVESNKKVEIVDIGCGYGGLTVALGPQFPDTLVLGMEIRMQVSDYLKEKIQALRYRADHEEPVPGGYKNISVLRMNCQKFLPNFFEKGQLSKMFFCFPDPHFKARKHKNRIITSTLASEYAYFIRPHGTLYTITDVEELHVWMAQHLDAHPLFRRFTKEEEENDICVTLMTNETEEGKKVARNGGKKFVACYERIPNPK</sequence>
<evidence type="ECO:0000255" key="1">
    <source>
        <dbReference type="HAMAP-Rule" id="MF_03055"/>
    </source>
</evidence>
<evidence type="ECO:0000256" key="2">
    <source>
        <dbReference type="SAM" id="MobiDB-lite"/>
    </source>
</evidence>
<protein>
    <recommendedName>
        <fullName evidence="1">tRNA (guanine-N(7)-)-methyltransferase</fullName>
        <ecNumber evidence="1">2.1.1.33</ecNumber>
    </recommendedName>
    <alternativeName>
        <fullName evidence="1">Transfer RNA methyltransferase 8</fullName>
    </alternativeName>
    <alternativeName>
        <fullName evidence="1">tRNA (guanine(46)-N(7))-methyltransferase</fullName>
    </alternativeName>
    <alternativeName>
        <fullName evidence="1">tRNA(m7G46)-methyltransferase</fullName>
    </alternativeName>
</protein>
<dbReference type="EC" id="2.1.1.33" evidence="1"/>
<dbReference type="EMBL" id="CU329672">
    <property type="protein sequence ID" value="CAC39323.1"/>
    <property type="molecule type" value="Genomic_DNA"/>
</dbReference>
<dbReference type="RefSeq" id="NP_588028.1">
    <property type="nucleotide sequence ID" value="NM_001023019.2"/>
</dbReference>
<dbReference type="SMR" id="Q96WV1"/>
<dbReference type="BioGRID" id="276134">
    <property type="interactions" value="17"/>
</dbReference>
<dbReference type="FunCoup" id="Q96WV1">
    <property type="interactions" value="263"/>
</dbReference>
<dbReference type="STRING" id="284812.Q96WV1"/>
<dbReference type="iPTMnet" id="Q96WV1"/>
<dbReference type="PaxDb" id="4896-SPCPB16A4.04c.1"/>
<dbReference type="EnsemblFungi" id="SPCPB16A4.04c.1">
    <property type="protein sequence ID" value="SPCPB16A4.04c.1:pep"/>
    <property type="gene ID" value="SPCPB16A4.04c"/>
</dbReference>
<dbReference type="GeneID" id="2539574"/>
<dbReference type="KEGG" id="spo:2539574"/>
<dbReference type="PomBase" id="SPCPB16A4.04c">
    <property type="gene designation" value="trm8"/>
</dbReference>
<dbReference type="VEuPathDB" id="FungiDB:SPCPB16A4.04c"/>
<dbReference type="eggNOG" id="KOG3115">
    <property type="taxonomic scope" value="Eukaryota"/>
</dbReference>
<dbReference type="HOGENOM" id="CLU_050910_3_1_1"/>
<dbReference type="InParanoid" id="Q96WV1"/>
<dbReference type="OMA" id="LPNYFAK"/>
<dbReference type="PhylomeDB" id="Q96WV1"/>
<dbReference type="UniPathway" id="UPA00989"/>
<dbReference type="PRO" id="PR:Q96WV1"/>
<dbReference type="Proteomes" id="UP000002485">
    <property type="component" value="Chromosome III"/>
</dbReference>
<dbReference type="GO" id="GO:0005730">
    <property type="term" value="C:nucleolus"/>
    <property type="evidence" value="ECO:0007005"/>
    <property type="project" value="PomBase"/>
</dbReference>
<dbReference type="GO" id="GO:0005634">
    <property type="term" value="C:nucleus"/>
    <property type="evidence" value="ECO:0007005"/>
    <property type="project" value="PomBase"/>
</dbReference>
<dbReference type="GO" id="GO:0106143">
    <property type="term" value="C:tRNA (m7G46) methyltransferase complex"/>
    <property type="evidence" value="ECO:0000305"/>
    <property type="project" value="PomBase"/>
</dbReference>
<dbReference type="GO" id="GO:0043527">
    <property type="term" value="C:tRNA methyltransferase complex"/>
    <property type="evidence" value="ECO:0000318"/>
    <property type="project" value="GO_Central"/>
</dbReference>
<dbReference type="GO" id="GO:0008176">
    <property type="term" value="F:tRNA (guanine(46)-N7)-methyltransferase activity"/>
    <property type="evidence" value="ECO:0000315"/>
    <property type="project" value="PomBase"/>
</dbReference>
<dbReference type="GO" id="GO:0000049">
    <property type="term" value="F:tRNA binding"/>
    <property type="evidence" value="ECO:0000305"/>
    <property type="project" value="PomBase"/>
</dbReference>
<dbReference type="GO" id="GO:0036265">
    <property type="term" value="P:RNA (guanine-N7)-methylation"/>
    <property type="evidence" value="ECO:0000318"/>
    <property type="project" value="GO_Central"/>
</dbReference>
<dbReference type="GO" id="GO:0106004">
    <property type="term" value="P:tRNA (guanine-N7)-methylation"/>
    <property type="evidence" value="ECO:0000315"/>
    <property type="project" value="PomBase"/>
</dbReference>
<dbReference type="GO" id="GO:0030488">
    <property type="term" value="P:tRNA methylation"/>
    <property type="evidence" value="ECO:0000318"/>
    <property type="project" value="GO_Central"/>
</dbReference>
<dbReference type="GO" id="GO:0006400">
    <property type="term" value="P:tRNA modification"/>
    <property type="evidence" value="ECO:0000250"/>
    <property type="project" value="UniProtKB"/>
</dbReference>
<dbReference type="CDD" id="cd02440">
    <property type="entry name" value="AdoMet_MTases"/>
    <property type="match status" value="1"/>
</dbReference>
<dbReference type="FunFam" id="3.40.50.150:FF:000060">
    <property type="entry name" value="tRNA (guanine-N(7)-)-methyltransferase"/>
    <property type="match status" value="1"/>
</dbReference>
<dbReference type="Gene3D" id="3.40.50.150">
    <property type="entry name" value="Vaccinia Virus protein VP39"/>
    <property type="match status" value="1"/>
</dbReference>
<dbReference type="HAMAP" id="MF_03055">
    <property type="entry name" value="tRNA_methyltr_TrmB_euk"/>
    <property type="match status" value="1"/>
</dbReference>
<dbReference type="InterPro" id="IPR029063">
    <property type="entry name" value="SAM-dependent_MTases_sf"/>
</dbReference>
<dbReference type="InterPro" id="IPR025763">
    <property type="entry name" value="Trm8_euk"/>
</dbReference>
<dbReference type="InterPro" id="IPR003358">
    <property type="entry name" value="tRNA_(Gua-N-7)_MeTrfase_Trmb"/>
</dbReference>
<dbReference type="NCBIfam" id="TIGR00091">
    <property type="entry name" value="tRNA (guanosine(46)-N7)-methyltransferase TrmB"/>
    <property type="match status" value="1"/>
</dbReference>
<dbReference type="PANTHER" id="PTHR23417">
    <property type="entry name" value="3-DEOXY-D-MANNO-OCTULOSONIC-ACID TRANSFERASE/TRNA GUANINE-N 7 - -METHYLTRANSFERASE"/>
    <property type="match status" value="1"/>
</dbReference>
<dbReference type="PANTHER" id="PTHR23417:SF16">
    <property type="entry name" value="TRNA (GUANINE-N(7)-)-METHYLTRANSFERASE"/>
    <property type="match status" value="1"/>
</dbReference>
<dbReference type="Pfam" id="PF02390">
    <property type="entry name" value="Methyltransf_4"/>
    <property type="match status" value="1"/>
</dbReference>
<dbReference type="SUPFAM" id="SSF53335">
    <property type="entry name" value="S-adenosyl-L-methionine-dependent methyltransferases"/>
    <property type="match status" value="1"/>
</dbReference>
<dbReference type="PROSITE" id="PS51625">
    <property type="entry name" value="SAM_MT_TRMB"/>
    <property type="match status" value="1"/>
</dbReference>
<keyword id="KW-0489">Methyltransferase</keyword>
<keyword id="KW-0539">Nucleus</keyword>
<keyword id="KW-1185">Reference proteome</keyword>
<keyword id="KW-0694">RNA-binding</keyword>
<keyword id="KW-0949">S-adenosyl-L-methionine</keyword>
<keyword id="KW-0808">Transferase</keyword>
<keyword id="KW-0819">tRNA processing</keyword>
<keyword id="KW-0820">tRNA-binding</keyword>
<proteinExistence type="inferred from homology"/>
<name>TRMB_SCHPO</name>
<gene>
    <name type="primary">trm8</name>
    <name type="ORF">SPCPB16A4.04c</name>
</gene>
<reference key="1">
    <citation type="journal article" date="2002" name="Nature">
        <title>The genome sequence of Schizosaccharomyces pombe.</title>
        <authorList>
            <person name="Wood V."/>
            <person name="Gwilliam R."/>
            <person name="Rajandream M.A."/>
            <person name="Lyne M.H."/>
            <person name="Lyne R."/>
            <person name="Stewart A."/>
            <person name="Sgouros J.G."/>
            <person name="Peat N."/>
            <person name="Hayles J."/>
            <person name="Baker S.G."/>
            <person name="Basham D."/>
            <person name="Bowman S."/>
            <person name="Brooks K."/>
            <person name="Brown D."/>
            <person name="Brown S."/>
            <person name="Chillingworth T."/>
            <person name="Churcher C.M."/>
            <person name="Collins M."/>
            <person name="Connor R."/>
            <person name="Cronin A."/>
            <person name="Davis P."/>
            <person name="Feltwell T."/>
            <person name="Fraser A."/>
            <person name="Gentles S."/>
            <person name="Goble A."/>
            <person name="Hamlin N."/>
            <person name="Harris D.E."/>
            <person name="Hidalgo J."/>
            <person name="Hodgson G."/>
            <person name="Holroyd S."/>
            <person name="Hornsby T."/>
            <person name="Howarth S."/>
            <person name="Huckle E.J."/>
            <person name="Hunt S."/>
            <person name="Jagels K."/>
            <person name="James K.D."/>
            <person name="Jones L."/>
            <person name="Jones M."/>
            <person name="Leather S."/>
            <person name="McDonald S."/>
            <person name="McLean J."/>
            <person name="Mooney P."/>
            <person name="Moule S."/>
            <person name="Mungall K.L."/>
            <person name="Murphy L.D."/>
            <person name="Niblett D."/>
            <person name="Odell C."/>
            <person name="Oliver K."/>
            <person name="O'Neil S."/>
            <person name="Pearson D."/>
            <person name="Quail M.A."/>
            <person name="Rabbinowitsch E."/>
            <person name="Rutherford K.M."/>
            <person name="Rutter S."/>
            <person name="Saunders D."/>
            <person name="Seeger K."/>
            <person name="Sharp S."/>
            <person name="Skelton J."/>
            <person name="Simmonds M.N."/>
            <person name="Squares R."/>
            <person name="Squares S."/>
            <person name="Stevens K."/>
            <person name="Taylor K."/>
            <person name="Taylor R.G."/>
            <person name="Tivey A."/>
            <person name="Walsh S.V."/>
            <person name="Warren T."/>
            <person name="Whitehead S."/>
            <person name="Woodward J.R."/>
            <person name="Volckaert G."/>
            <person name="Aert R."/>
            <person name="Robben J."/>
            <person name="Grymonprez B."/>
            <person name="Weltjens I."/>
            <person name="Vanstreels E."/>
            <person name="Rieger M."/>
            <person name="Schaefer M."/>
            <person name="Mueller-Auer S."/>
            <person name="Gabel C."/>
            <person name="Fuchs M."/>
            <person name="Duesterhoeft A."/>
            <person name="Fritzc C."/>
            <person name="Holzer E."/>
            <person name="Moestl D."/>
            <person name="Hilbert H."/>
            <person name="Borzym K."/>
            <person name="Langer I."/>
            <person name="Beck A."/>
            <person name="Lehrach H."/>
            <person name="Reinhardt R."/>
            <person name="Pohl T.M."/>
            <person name="Eger P."/>
            <person name="Zimmermann W."/>
            <person name="Wedler H."/>
            <person name="Wambutt R."/>
            <person name="Purnelle B."/>
            <person name="Goffeau A."/>
            <person name="Cadieu E."/>
            <person name="Dreano S."/>
            <person name="Gloux S."/>
            <person name="Lelaure V."/>
            <person name="Mottier S."/>
            <person name="Galibert F."/>
            <person name="Aves S.J."/>
            <person name="Xiang Z."/>
            <person name="Hunt C."/>
            <person name="Moore K."/>
            <person name="Hurst S.M."/>
            <person name="Lucas M."/>
            <person name="Rochet M."/>
            <person name="Gaillardin C."/>
            <person name="Tallada V.A."/>
            <person name="Garzon A."/>
            <person name="Thode G."/>
            <person name="Daga R.R."/>
            <person name="Cruzado L."/>
            <person name="Jimenez J."/>
            <person name="Sanchez M."/>
            <person name="del Rey F."/>
            <person name="Benito J."/>
            <person name="Dominguez A."/>
            <person name="Revuelta J.L."/>
            <person name="Moreno S."/>
            <person name="Armstrong J."/>
            <person name="Forsburg S.L."/>
            <person name="Cerutti L."/>
            <person name="Lowe T."/>
            <person name="McCombie W.R."/>
            <person name="Paulsen I."/>
            <person name="Potashkin J."/>
            <person name="Shpakovski G.V."/>
            <person name="Ussery D."/>
            <person name="Barrell B.G."/>
            <person name="Nurse P."/>
        </authorList>
    </citation>
    <scope>NUCLEOTIDE SEQUENCE [LARGE SCALE GENOMIC DNA]</scope>
    <source>
        <strain>972 / ATCC 24843</strain>
    </source>
</reference>
<organism>
    <name type="scientific">Schizosaccharomyces pombe (strain 972 / ATCC 24843)</name>
    <name type="common">Fission yeast</name>
    <dbReference type="NCBI Taxonomy" id="284812"/>
    <lineage>
        <taxon>Eukaryota</taxon>
        <taxon>Fungi</taxon>
        <taxon>Dikarya</taxon>
        <taxon>Ascomycota</taxon>
        <taxon>Taphrinomycotina</taxon>
        <taxon>Schizosaccharomycetes</taxon>
        <taxon>Schizosaccharomycetales</taxon>
        <taxon>Schizosaccharomycetaceae</taxon>
        <taxon>Schizosaccharomyces</taxon>
    </lineage>
</organism>
<accession>Q96WV1</accession>
<feature type="chain" id="PRO_0000171436" description="tRNA (guanine-N(7)-)-methyltransferase">
    <location>
        <begin position="1"/>
        <end position="273"/>
    </location>
</feature>
<feature type="region of interest" description="Disordered" evidence="2">
    <location>
        <begin position="1"/>
        <end position="32"/>
    </location>
</feature>
<feature type="active site" evidence="1">
    <location>
        <position position="173"/>
    </location>
</feature>
<feature type="binding site" evidence="1">
    <location>
        <position position="88"/>
    </location>
    <ligand>
        <name>S-adenosyl-L-methionine</name>
        <dbReference type="ChEBI" id="CHEBI:59789"/>
    </ligand>
</feature>
<feature type="binding site" evidence="1">
    <location>
        <begin position="111"/>
        <end position="112"/>
    </location>
    <ligand>
        <name>S-adenosyl-L-methionine</name>
        <dbReference type="ChEBI" id="CHEBI:59789"/>
    </ligand>
</feature>
<feature type="binding site" evidence="1">
    <location>
        <begin position="150"/>
        <end position="151"/>
    </location>
    <ligand>
        <name>S-adenosyl-L-methionine</name>
        <dbReference type="ChEBI" id="CHEBI:59789"/>
    </ligand>
</feature>
<feature type="binding site" evidence="1">
    <location>
        <position position="170"/>
    </location>
    <ligand>
        <name>S-adenosyl-L-methionine</name>
        <dbReference type="ChEBI" id="CHEBI:59789"/>
    </ligand>
</feature>
<feature type="binding site" evidence="1">
    <location>
        <begin position="248"/>
        <end position="250"/>
    </location>
    <ligand>
        <name>S-adenosyl-L-methionine</name>
        <dbReference type="ChEBI" id="CHEBI:59789"/>
    </ligand>
</feature>
<comment type="function">
    <text evidence="1">Catalyzes the formation of N(7)-methylguanine at position 46 (m7G46) in tRNA.</text>
</comment>
<comment type="catalytic activity">
    <reaction evidence="1">
        <text>guanosine(46) in tRNA + S-adenosyl-L-methionine = N(7)-methylguanosine(46) in tRNA + S-adenosyl-L-homocysteine</text>
        <dbReference type="Rhea" id="RHEA:42708"/>
        <dbReference type="Rhea" id="RHEA-COMP:10188"/>
        <dbReference type="Rhea" id="RHEA-COMP:10189"/>
        <dbReference type="ChEBI" id="CHEBI:57856"/>
        <dbReference type="ChEBI" id="CHEBI:59789"/>
        <dbReference type="ChEBI" id="CHEBI:74269"/>
        <dbReference type="ChEBI" id="CHEBI:74480"/>
        <dbReference type="EC" id="2.1.1.33"/>
    </reaction>
</comment>
<comment type="pathway">
    <text evidence="1">tRNA modification; N(7)-methylguanine-tRNA biosynthesis.</text>
</comment>
<comment type="subunit">
    <text evidence="1">Forms a complex with trm82.</text>
</comment>
<comment type="subcellular location">
    <subcellularLocation>
        <location evidence="1">Nucleus</location>
    </subcellularLocation>
</comment>
<comment type="similarity">
    <text evidence="1">Belongs to the class I-like SAM-binding methyltransferase superfamily. TrmB family.</text>
</comment>